<keyword id="KW-0012">Acyltransferase</keyword>
<keyword id="KW-0056">Arginine metabolism</keyword>
<keyword id="KW-0808">Transferase</keyword>
<gene>
    <name evidence="1" type="primary">astA</name>
    <name type="ordered locus">YPTB1960</name>
</gene>
<reference key="1">
    <citation type="journal article" date="2004" name="Proc. Natl. Acad. Sci. U.S.A.">
        <title>Insights into the evolution of Yersinia pestis through whole-genome comparison with Yersinia pseudotuberculosis.</title>
        <authorList>
            <person name="Chain P.S.G."/>
            <person name="Carniel E."/>
            <person name="Larimer F.W."/>
            <person name="Lamerdin J."/>
            <person name="Stoutland P.O."/>
            <person name="Regala W.M."/>
            <person name="Georgescu A.M."/>
            <person name="Vergez L.M."/>
            <person name="Land M.L."/>
            <person name="Motin V.L."/>
            <person name="Brubaker R.R."/>
            <person name="Fowler J."/>
            <person name="Hinnebusch J."/>
            <person name="Marceau M."/>
            <person name="Medigue C."/>
            <person name="Simonet M."/>
            <person name="Chenal-Francisque V."/>
            <person name="Souza B."/>
            <person name="Dacheux D."/>
            <person name="Elliott J.M."/>
            <person name="Derbise A."/>
            <person name="Hauser L.J."/>
            <person name="Garcia E."/>
        </authorList>
    </citation>
    <scope>NUCLEOTIDE SEQUENCE [LARGE SCALE GENOMIC DNA]</scope>
    <source>
        <strain>IP32953</strain>
    </source>
</reference>
<organism>
    <name type="scientific">Yersinia pseudotuberculosis serotype I (strain IP32953)</name>
    <dbReference type="NCBI Taxonomy" id="273123"/>
    <lineage>
        <taxon>Bacteria</taxon>
        <taxon>Pseudomonadati</taxon>
        <taxon>Pseudomonadota</taxon>
        <taxon>Gammaproteobacteria</taxon>
        <taxon>Enterobacterales</taxon>
        <taxon>Yersiniaceae</taxon>
        <taxon>Yersinia</taxon>
    </lineage>
</organism>
<evidence type="ECO:0000255" key="1">
    <source>
        <dbReference type="HAMAP-Rule" id="MF_01171"/>
    </source>
</evidence>
<accession>Q66B20</accession>
<comment type="function">
    <text evidence="1">Catalyzes the transfer of succinyl-CoA to arginine to produce N(2)-succinylarginine.</text>
</comment>
<comment type="catalytic activity">
    <reaction evidence="1">
        <text>succinyl-CoA + L-arginine = N(2)-succinyl-L-arginine + CoA + H(+)</text>
        <dbReference type="Rhea" id="RHEA:15185"/>
        <dbReference type="ChEBI" id="CHEBI:15378"/>
        <dbReference type="ChEBI" id="CHEBI:32682"/>
        <dbReference type="ChEBI" id="CHEBI:57287"/>
        <dbReference type="ChEBI" id="CHEBI:57292"/>
        <dbReference type="ChEBI" id="CHEBI:58241"/>
        <dbReference type="EC" id="2.3.1.109"/>
    </reaction>
</comment>
<comment type="pathway">
    <text evidence="1">Amino-acid degradation; L-arginine degradation via AST pathway; L-glutamate and succinate from L-arginine: step 1/5.</text>
</comment>
<comment type="similarity">
    <text evidence="1">Belongs to the arginine N-succinyltransferase family.</text>
</comment>
<feature type="chain" id="PRO_0000262336" description="Arginine N-succinyltransferase">
    <location>
        <begin position="1"/>
        <end position="350"/>
    </location>
</feature>
<feature type="active site" description="Proton donor" evidence="1">
    <location>
        <position position="229"/>
    </location>
</feature>
<feature type="binding site" evidence="1">
    <location>
        <position position="125"/>
    </location>
    <ligand>
        <name>succinyl-CoA</name>
        <dbReference type="ChEBI" id="CHEBI:57292"/>
    </ligand>
</feature>
<sequence length="350" mass="39440">MMKVRPVERRDLADIFELAGKTGVGMTSLPQNEQHLAARIERALNTWQGSLDPGEQGYLFVLEDSEQQKVVGVSAIEVAVGLNDPWYNFRVGTLVHASKALNVYKSVPTLFLSNDHTGYSELCTLFLDPDYRKDKNGPFLSKVRFLFIAAFRQYFSRKVIAEMRGYTDEQGRSPFWESVGRHFFSIEFAKADYLSGTGQKAFIAELMPKHPLYVDFLAEEARAVIGQVHPHTAPARAVLETEGLQYQGYVDIFDGGPTLEANTDDVRAVRDSSKRTVVIKDYDIEDYDIDPNGRLYLVANDHYHHFRAILMNTHLSDERLRLTPESAEALGVAAGDSVRIVSLFAPETKR</sequence>
<dbReference type="EC" id="2.3.1.109" evidence="1"/>
<dbReference type="EMBL" id="BX936398">
    <property type="protein sequence ID" value="CAH21198.1"/>
    <property type="molecule type" value="Genomic_DNA"/>
</dbReference>
<dbReference type="RefSeq" id="WP_011192371.1">
    <property type="nucleotide sequence ID" value="NC_006155.1"/>
</dbReference>
<dbReference type="SMR" id="Q66B20"/>
<dbReference type="GeneID" id="49786051"/>
<dbReference type="KEGG" id="ypo:BZ17_509"/>
<dbReference type="KEGG" id="yps:YPTB1960"/>
<dbReference type="PATRIC" id="fig|273123.14.peg.544"/>
<dbReference type="UniPathway" id="UPA00185">
    <property type="reaction ID" value="UER00279"/>
</dbReference>
<dbReference type="Proteomes" id="UP000001011">
    <property type="component" value="Chromosome"/>
</dbReference>
<dbReference type="GO" id="GO:0008791">
    <property type="term" value="F:arginine N-succinyltransferase activity"/>
    <property type="evidence" value="ECO:0007669"/>
    <property type="project" value="UniProtKB-UniRule"/>
</dbReference>
<dbReference type="GO" id="GO:0019544">
    <property type="term" value="P:arginine catabolic process to glutamate"/>
    <property type="evidence" value="ECO:0007669"/>
    <property type="project" value="UniProtKB-UniRule"/>
</dbReference>
<dbReference type="GO" id="GO:0019545">
    <property type="term" value="P:arginine catabolic process to succinate"/>
    <property type="evidence" value="ECO:0007669"/>
    <property type="project" value="UniProtKB-UniRule"/>
</dbReference>
<dbReference type="Gene3D" id="2.40.40.20">
    <property type="match status" value="1"/>
</dbReference>
<dbReference type="HAMAP" id="MF_01171">
    <property type="entry name" value="AstA"/>
    <property type="match status" value="1"/>
</dbReference>
<dbReference type="InterPro" id="IPR016181">
    <property type="entry name" value="Acyl_CoA_acyltransferase"/>
</dbReference>
<dbReference type="InterPro" id="IPR007041">
    <property type="entry name" value="Arg_succinylTrfase_AstA/AruG"/>
</dbReference>
<dbReference type="InterPro" id="IPR017650">
    <property type="entry name" value="Arginine_N-succinylTrfase"/>
</dbReference>
<dbReference type="NCBIfam" id="TIGR03243">
    <property type="entry name" value="arg_catab_AOST"/>
    <property type="match status" value="1"/>
</dbReference>
<dbReference type="NCBIfam" id="TIGR03244">
    <property type="entry name" value="arg_catab_AstA"/>
    <property type="match status" value="1"/>
</dbReference>
<dbReference type="NCBIfam" id="NF007770">
    <property type="entry name" value="PRK10456.1"/>
    <property type="match status" value="1"/>
</dbReference>
<dbReference type="PANTHER" id="PTHR30420:SF1">
    <property type="entry name" value="ARGININE N-SUCCINYLTRANSFERASE"/>
    <property type="match status" value="1"/>
</dbReference>
<dbReference type="PANTHER" id="PTHR30420">
    <property type="entry name" value="N-SUCCINYLARGININE DIHYDROLASE"/>
    <property type="match status" value="1"/>
</dbReference>
<dbReference type="Pfam" id="PF04958">
    <property type="entry name" value="AstA"/>
    <property type="match status" value="1"/>
</dbReference>
<dbReference type="SUPFAM" id="SSF55729">
    <property type="entry name" value="Acyl-CoA N-acyltransferases (Nat)"/>
    <property type="match status" value="1"/>
</dbReference>
<protein>
    <recommendedName>
        <fullName evidence="1">Arginine N-succinyltransferase</fullName>
        <shortName evidence="1">AST</shortName>
        <ecNumber evidence="1">2.3.1.109</ecNumber>
    </recommendedName>
    <alternativeName>
        <fullName evidence="1">AOST</fullName>
    </alternativeName>
</protein>
<proteinExistence type="inferred from homology"/>
<name>ASTA_YERPS</name>